<protein>
    <recommendedName>
        <fullName evidence="1">Small ribosomal subunit protein uS17</fullName>
    </recommendedName>
    <alternativeName>
        <fullName evidence="2">30S ribosomal protein S17</fullName>
    </alternativeName>
</protein>
<proteinExistence type="inferred from homology"/>
<keyword id="KW-1185">Reference proteome</keyword>
<keyword id="KW-0687">Ribonucleoprotein</keyword>
<keyword id="KW-0689">Ribosomal protein</keyword>
<keyword id="KW-0694">RNA-binding</keyword>
<keyword id="KW-0699">rRNA-binding</keyword>
<organism>
    <name type="scientific">Xylella fastidiosa (strain Temecula1 / ATCC 700964)</name>
    <dbReference type="NCBI Taxonomy" id="183190"/>
    <lineage>
        <taxon>Bacteria</taxon>
        <taxon>Pseudomonadati</taxon>
        <taxon>Pseudomonadota</taxon>
        <taxon>Gammaproteobacteria</taxon>
        <taxon>Lysobacterales</taxon>
        <taxon>Lysobacteraceae</taxon>
        <taxon>Xylella</taxon>
    </lineage>
</organism>
<feature type="chain" id="PRO_0000233619" description="Small ribosomal subunit protein uS17">
    <location>
        <begin position="1"/>
        <end position="89"/>
    </location>
</feature>
<sequence>MMNDNNERKPLRTIKGLVISNKMQKTVTVLVERQIKHALYGKYIKRSTKLHAHDADDLCNEGDVVLMTEVAPISKTKNWRVVEIVARSD</sequence>
<dbReference type="EMBL" id="AE009442">
    <property type="protein sequence ID" value="AAO28325.1"/>
    <property type="molecule type" value="Genomic_DNA"/>
</dbReference>
<dbReference type="SMR" id="Q87E73"/>
<dbReference type="KEGG" id="xft:PD_0446"/>
<dbReference type="HOGENOM" id="CLU_073626_1_1_6"/>
<dbReference type="Proteomes" id="UP000002516">
    <property type="component" value="Chromosome"/>
</dbReference>
<dbReference type="GO" id="GO:0022627">
    <property type="term" value="C:cytosolic small ribosomal subunit"/>
    <property type="evidence" value="ECO:0007669"/>
    <property type="project" value="TreeGrafter"/>
</dbReference>
<dbReference type="GO" id="GO:0019843">
    <property type="term" value="F:rRNA binding"/>
    <property type="evidence" value="ECO:0007669"/>
    <property type="project" value="UniProtKB-UniRule"/>
</dbReference>
<dbReference type="GO" id="GO:0003735">
    <property type="term" value="F:structural constituent of ribosome"/>
    <property type="evidence" value="ECO:0007669"/>
    <property type="project" value="InterPro"/>
</dbReference>
<dbReference type="GO" id="GO:0006412">
    <property type="term" value="P:translation"/>
    <property type="evidence" value="ECO:0007669"/>
    <property type="project" value="UniProtKB-UniRule"/>
</dbReference>
<dbReference type="CDD" id="cd00364">
    <property type="entry name" value="Ribosomal_uS17"/>
    <property type="match status" value="1"/>
</dbReference>
<dbReference type="Gene3D" id="2.40.50.140">
    <property type="entry name" value="Nucleic acid-binding proteins"/>
    <property type="match status" value="1"/>
</dbReference>
<dbReference type="HAMAP" id="MF_01345_B">
    <property type="entry name" value="Ribosomal_uS17_B"/>
    <property type="match status" value="1"/>
</dbReference>
<dbReference type="InterPro" id="IPR012340">
    <property type="entry name" value="NA-bd_OB-fold"/>
</dbReference>
<dbReference type="InterPro" id="IPR000266">
    <property type="entry name" value="Ribosomal_uS17"/>
</dbReference>
<dbReference type="InterPro" id="IPR019984">
    <property type="entry name" value="Ribosomal_uS17_bact/chlr"/>
</dbReference>
<dbReference type="NCBIfam" id="NF004123">
    <property type="entry name" value="PRK05610.1"/>
    <property type="match status" value="1"/>
</dbReference>
<dbReference type="NCBIfam" id="TIGR03635">
    <property type="entry name" value="uS17_bact"/>
    <property type="match status" value="1"/>
</dbReference>
<dbReference type="PANTHER" id="PTHR10744">
    <property type="entry name" value="40S RIBOSOMAL PROTEIN S11 FAMILY MEMBER"/>
    <property type="match status" value="1"/>
</dbReference>
<dbReference type="PANTHER" id="PTHR10744:SF1">
    <property type="entry name" value="SMALL RIBOSOMAL SUBUNIT PROTEIN US17M"/>
    <property type="match status" value="1"/>
</dbReference>
<dbReference type="Pfam" id="PF00366">
    <property type="entry name" value="Ribosomal_S17"/>
    <property type="match status" value="1"/>
</dbReference>
<dbReference type="PRINTS" id="PR00973">
    <property type="entry name" value="RIBOSOMALS17"/>
</dbReference>
<dbReference type="SUPFAM" id="SSF50249">
    <property type="entry name" value="Nucleic acid-binding proteins"/>
    <property type="match status" value="1"/>
</dbReference>
<comment type="function">
    <text evidence="1">One of the primary rRNA binding proteins, it binds specifically to the 5'-end of 16S ribosomal RNA.</text>
</comment>
<comment type="subunit">
    <text evidence="1">Part of the 30S ribosomal subunit.</text>
</comment>
<comment type="similarity">
    <text evidence="1">Belongs to the universal ribosomal protein uS17 family.</text>
</comment>
<name>RS17_XYLFT</name>
<evidence type="ECO:0000255" key="1">
    <source>
        <dbReference type="HAMAP-Rule" id="MF_01345"/>
    </source>
</evidence>
<evidence type="ECO:0000305" key="2"/>
<reference key="1">
    <citation type="journal article" date="2003" name="J. Bacteriol.">
        <title>Comparative analyses of the complete genome sequences of Pierce's disease and citrus variegated chlorosis strains of Xylella fastidiosa.</title>
        <authorList>
            <person name="Van Sluys M.A."/>
            <person name="de Oliveira M.C."/>
            <person name="Monteiro-Vitorello C.B."/>
            <person name="Miyaki C.Y."/>
            <person name="Furlan L.R."/>
            <person name="Camargo L.E.A."/>
            <person name="da Silva A.C.R."/>
            <person name="Moon D.H."/>
            <person name="Takita M.A."/>
            <person name="Lemos E.G.M."/>
            <person name="Machado M.A."/>
            <person name="Ferro M.I.T."/>
            <person name="da Silva F.R."/>
            <person name="Goldman M.H.S."/>
            <person name="Goldman G.H."/>
            <person name="Lemos M.V.F."/>
            <person name="El-Dorry H."/>
            <person name="Tsai S.M."/>
            <person name="Carrer H."/>
            <person name="Carraro D.M."/>
            <person name="de Oliveira R.C."/>
            <person name="Nunes L.R."/>
            <person name="Siqueira W.J."/>
            <person name="Coutinho L.L."/>
            <person name="Kimura E.T."/>
            <person name="Ferro E.S."/>
            <person name="Harakava R."/>
            <person name="Kuramae E.E."/>
            <person name="Marino C.L."/>
            <person name="Giglioti E."/>
            <person name="Abreu I.L."/>
            <person name="Alves L.M.C."/>
            <person name="do Amaral A.M."/>
            <person name="Baia G.S."/>
            <person name="Blanco S.R."/>
            <person name="Brito M.S."/>
            <person name="Cannavan F.S."/>
            <person name="Celestino A.V."/>
            <person name="da Cunha A.F."/>
            <person name="Fenille R.C."/>
            <person name="Ferro J.A."/>
            <person name="Formighieri E.F."/>
            <person name="Kishi L.T."/>
            <person name="Leoni S.G."/>
            <person name="Oliveira A.R."/>
            <person name="Rosa V.E. Jr."/>
            <person name="Sassaki F.T."/>
            <person name="Sena J.A.D."/>
            <person name="de Souza A.A."/>
            <person name="Truffi D."/>
            <person name="Tsukumo F."/>
            <person name="Yanai G.M."/>
            <person name="Zaros L.G."/>
            <person name="Civerolo E.L."/>
            <person name="Simpson A.J.G."/>
            <person name="Almeida N.F. Jr."/>
            <person name="Setubal J.C."/>
            <person name="Kitajima J.P."/>
        </authorList>
    </citation>
    <scope>NUCLEOTIDE SEQUENCE [LARGE SCALE GENOMIC DNA]</scope>
    <source>
        <strain>Temecula1 / ATCC 700964</strain>
    </source>
</reference>
<accession>Q87E73</accession>
<gene>
    <name evidence="1" type="primary">rpsQ</name>
    <name type="ordered locus">PD_0446</name>
</gene>